<comment type="function">
    <text>The M protein has a crucial role in virus assembly and interacts with the RNP complex as well as with the viral membrane.</text>
</comment>
<comment type="subcellular location">
    <subcellularLocation>
        <location evidence="1">Virion</location>
    </subcellularLocation>
</comment>
<comment type="similarity">
    <text evidence="1">Belongs to the morbillivirus/respirovirus/rubulavirus M protein family.</text>
</comment>
<evidence type="ECO:0000305" key="1"/>
<accession>P41358</accession>
<name>MATRX_RINDR</name>
<gene>
    <name type="primary">M</name>
</gene>
<organismHost>
    <name type="scientific">Bos indicus</name>
    <name type="common">Zebu</name>
    <dbReference type="NCBI Taxonomy" id="9915"/>
</organismHost>
<organismHost>
    <name type="scientific">Bos taurus</name>
    <name type="common">Bovine</name>
    <dbReference type="NCBI Taxonomy" id="9913"/>
</organismHost>
<organismHost>
    <name type="scientific">Bubalus bubalis</name>
    <name type="common">Domestic water buffalo</name>
    <dbReference type="NCBI Taxonomy" id="89462"/>
</organismHost>
<organismHost>
    <name type="scientific">Capra hircus</name>
    <name type="common">Goat</name>
    <dbReference type="NCBI Taxonomy" id="9925"/>
</organismHost>
<organismHost>
    <name type="scientific">Gazella</name>
    <name type="common">gazelles</name>
    <dbReference type="NCBI Taxonomy" id="9933"/>
</organismHost>
<organismHost>
    <name type="scientific">Giraffa camelopardalis</name>
    <name type="common">Giraffe</name>
    <dbReference type="NCBI Taxonomy" id="9894"/>
</organismHost>
<organismHost>
    <name type="scientific">Hippopotamus</name>
    <dbReference type="NCBI Taxonomy" id="9832"/>
</organismHost>
<organismHost>
    <name type="scientific">Ovis aries</name>
    <name type="common">Sheep</name>
    <dbReference type="NCBI Taxonomy" id="9940"/>
</organismHost>
<organismHost>
    <name type="scientific">Suidae</name>
    <name type="common">pigs</name>
    <dbReference type="NCBI Taxonomy" id="9821"/>
</organismHost>
<sequence length="335" mass="37611">MAEIYDFDKSAWDVKGSIAPIRPKTYSDGRLIPQVRVIDPGFGDRKDECFMYIFLLGIVEDSDPLSPPRGRTFGSLPLGVGKSTAKPEELLKEVTDLDIVVRRTAGLNEKLVFYNNTPLSLLTPWKKILTTGSVFNANQVCNAVNMIPLDTPQRFRVVYMSITRLSDSGYYTVPRKMLEFRSANAVAFNLLVTLEIDRDTEPGRPAAGGLGLSEATFMVHVGNFRRKKNEAYSADYCKMKIEKMGLVFALGGIGGTSLHIRSTGKMSKTLHAQLGFKKTLCYPLMDINEDLNRLLWRSRCKIVRIQAVLQPSVPQEFRIYDDVIINDDQGLFKVL</sequence>
<feature type="chain" id="PRO_0000142770" description="Matrix protein">
    <location>
        <begin position="1"/>
        <end position="335"/>
    </location>
</feature>
<keyword id="KW-1185">Reference proteome</keyword>
<keyword id="KW-0261">Viral envelope protein</keyword>
<keyword id="KW-0468">Viral matrix protein</keyword>
<keyword id="KW-0946">Virion</keyword>
<proteinExistence type="inferred from homology"/>
<dbReference type="EMBL" id="Z30697">
    <property type="protein sequence ID" value="CAA83180.1"/>
    <property type="molecule type" value="Genomic_RNA"/>
</dbReference>
<dbReference type="PIR" id="S47304">
    <property type="entry name" value="S47304"/>
</dbReference>
<dbReference type="SMR" id="P41358"/>
<dbReference type="Proteomes" id="UP000008654">
    <property type="component" value="Genome"/>
</dbReference>
<dbReference type="GO" id="GO:0019031">
    <property type="term" value="C:viral envelope"/>
    <property type="evidence" value="ECO:0007669"/>
    <property type="project" value="UniProtKB-KW"/>
</dbReference>
<dbReference type="GO" id="GO:0039660">
    <property type="term" value="F:structural constituent of virion"/>
    <property type="evidence" value="ECO:0007669"/>
    <property type="project" value="UniProtKB-KW"/>
</dbReference>
<dbReference type="GO" id="GO:0019068">
    <property type="term" value="P:virion assembly"/>
    <property type="evidence" value="ECO:0007669"/>
    <property type="project" value="InterPro"/>
</dbReference>
<dbReference type="Gene3D" id="2.70.20.60">
    <property type="entry name" value="Viral matrix protein, C-terminal domain"/>
    <property type="match status" value="1"/>
</dbReference>
<dbReference type="Gene3D" id="2.70.20.50">
    <property type="entry name" value="Viral matrix protein, N-terminal domain"/>
    <property type="match status" value="1"/>
</dbReference>
<dbReference type="InterPro" id="IPR042539">
    <property type="entry name" value="Matrix_C"/>
</dbReference>
<dbReference type="InterPro" id="IPR042540">
    <property type="entry name" value="Matrix_N"/>
</dbReference>
<dbReference type="InterPro" id="IPR055413">
    <property type="entry name" value="Matrix_Paramyxo_C"/>
</dbReference>
<dbReference type="InterPro" id="IPR000982">
    <property type="entry name" value="Matrix_Paramyxo_N"/>
</dbReference>
<dbReference type="Pfam" id="PF23765">
    <property type="entry name" value="Matrix_Paramyxo_C"/>
    <property type="match status" value="1"/>
</dbReference>
<dbReference type="Pfam" id="PF00661">
    <property type="entry name" value="Matrix_Paramyxo_N"/>
    <property type="match status" value="1"/>
</dbReference>
<protein>
    <recommendedName>
        <fullName>Matrix protein</fullName>
    </recommendedName>
</protein>
<reference key="1">
    <citation type="journal article" date="1995" name="J. Gen. Virol.">
        <title>Sequencing and analysis of the nucleocapsid (N) and polymerase (L) genes and the terminal extragenic domains of the vaccine strain of rinderpest virus.</title>
        <authorList>
            <person name="Baron M.D."/>
            <person name="Barrett T."/>
        </authorList>
    </citation>
    <scope>NUCLEOTIDE SEQUENCE [GENOMIC RNA]</scope>
</reference>
<organism>
    <name type="scientific">Rinderpest virus (strain RBOK)</name>
    <name type="common">RDV</name>
    <dbReference type="NCBI Taxonomy" id="36409"/>
    <lineage>
        <taxon>Viruses</taxon>
        <taxon>Riboviria</taxon>
        <taxon>Orthornavirae</taxon>
        <taxon>Negarnaviricota</taxon>
        <taxon>Haploviricotina</taxon>
        <taxon>Monjiviricetes</taxon>
        <taxon>Mononegavirales</taxon>
        <taxon>Paramyxoviridae</taxon>
        <taxon>Orthoparamyxovirinae</taxon>
        <taxon>Morbillivirus</taxon>
        <taxon>Morbillivirus pecoris</taxon>
        <taxon>Rinderpest morbillivirus</taxon>
    </lineage>
</organism>